<evidence type="ECO:0000250" key="1">
    <source>
        <dbReference type="UniProtKB" id="P84566"/>
    </source>
</evidence>
<evidence type="ECO:0000255" key="2"/>
<evidence type="ECO:0000269" key="3">
    <source ref="1"/>
</evidence>
<evidence type="ECO:0000303" key="4">
    <source ref="1"/>
</evidence>
<evidence type="ECO:0000305" key="5"/>
<dbReference type="GO" id="GO:0005576">
    <property type="term" value="C:extracellular region"/>
    <property type="evidence" value="ECO:0007669"/>
    <property type="project" value="UniProtKB-SubCell"/>
</dbReference>
<dbReference type="GO" id="GO:0006952">
    <property type="term" value="P:defense response"/>
    <property type="evidence" value="ECO:0007669"/>
    <property type="project" value="UniProtKB-KW"/>
</dbReference>
<keyword id="KW-0027">Amidation</keyword>
<keyword id="KW-0878">Amphibian defense peptide</keyword>
<keyword id="KW-0929">Antimicrobial</keyword>
<keyword id="KW-0903">Direct protein sequencing</keyword>
<keyword id="KW-0964">Secreted</keyword>
<organism>
    <name type="scientific">Phyllomedusa tarsius</name>
    <name type="common">Brownbelly leaf frog</name>
    <name type="synonym">Phyllomedusa tarsia</name>
    <dbReference type="NCBI Taxonomy" id="306084"/>
    <lineage>
        <taxon>Eukaryota</taxon>
        <taxon>Metazoa</taxon>
        <taxon>Chordata</taxon>
        <taxon>Craniata</taxon>
        <taxon>Vertebrata</taxon>
        <taxon>Euteleostomi</taxon>
        <taxon>Amphibia</taxon>
        <taxon>Batrachia</taxon>
        <taxon>Anura</taxon>
        <taxon>Neobatrachia</taxon>
        <taxon>Hyloidea</taxon>
        <taxon>Hylidae</taxon>
        <taxon>Phyllomedusinae</taxon>
        <taxon>Phyllomedusa</taxon>
    </lineage>
</organism>
<proteinExistence type="evidence at protein level"/>
<protein>
    <recommendedName>
        <fullName evidence="4">Phylloseptin-1</fullName>
        <shortName evidence="4">PStar 01</shortName>
    </recommendedName>
</protein>
<sequence length="19" mass="1954">FLSLIPKIAGGIASLVKNL</sequence>
<comment type="function">
    <text evidence="1">Has antimicrobial activity.</text>
</comment>
<comment type="subcellular location">
    <subcellularLocation>
        <location evidence="3">Secreted</location>
    </subcellularLocation>
</comment>
<comment type="tissue specificity">
    <text evidence="3">Expressed by the skin glands.</text>
</comment>
<comment type="mass spectrometry" mass="1953.23" error="0.1" method="MALDI" evidence="3"/>
<comment type="similarity">
    <text evidence="2">Belongs to the frog skin active peptide (FSAP) family. Phylloseptin subfamily.</text>
</comment>
<comment type="online information" name="The antimicrobial peptide database">
    <link uri="https://wangapd3.com/database/query_output.php?ID=02989"/>
</comment>
<accession>P84929</accession>
<name>PLS1_PHYTS</name>
<reference evidence="5" key="1">
    <citation type="submission" date="2006-08" db="UniProtKB">
        <title>Dermaseptins and phylloseptins from Phyllomedusa tarsius (Amphibia).</title>
        <authorList>
            <person name="Prates M.V."/>
            <person name="Jardim D.P."/>
            <person name="Silva L.P."/>
            <person name="Gordo M."/>
            <person name="Leite J.R.S.A."/>
            <person name="Figueredo R.C.R."/>
            <person name="Amaral A.C."/>
            <person name="Felipe M.S.S."/>
            <person name="Bloch C. Jr."/>
        </authorList>
    </citation>
    <scope>PROTEIN SEQUENCE</scope>
    <scope>SUBCELLULAR LOCATION</scope>
    <scope>TISSUE SPECIFICITY</scope>
    <scope>MASS SPECTROMETRY</scope>
    <scope>AMIDATION AT LEU-19</scope>
    <source>
        <tissue evidence="3">Skin secretion</tissue>
    </source>
</reference>
<feature type="peptide" id="PRO_0000376045" description="Phylloseptin-1" evidence="3">
    <location>
        <begin position="1"/>
        <end position="19"/>
    </location>
</feature>
<feature type="modified residue" description="Leucine amide" evidence="3">
    <location>
        <position position="19"/>
    </location>
</feature>